<dbReference type="EMBL" id="U00096">
    <property type="protein sequence ID" value="AAC74863.1"/>
    <property type="molecule type" value="Genomic_DNA"/>
</dbReference>
<dbReference type="EMBL" id="AP009048">
    <property type="protein sequence ID" value="BAE76530.1"/>
    <property type="molecule type" value="Genomic_DNA"/>
</dbReference>
<dbReference type="PIR" id="A64940">
    <property type="entry name" value="A64940"/>
</dbReference>
<dbReference type="RefSeq" id="NP_416307.1">
    <property type="nucleotide sequence ID" value="NC_000913.3"/>
</dbReference>
<dbReference type="RefSeq" id="WP_000691930.1">
    <property type="nucleotide sequence ID" value="NZ_STEB01000009.1"/>
</dbReference>
<dbReference type="BioGRID" id="4260329">
    <property type="interactions" value="14"/>
</dbReference>
<dbReference type="FunCoup" id="P64493">
    <property type="interactions" value="3"/>
</dbReference>
<dbReference type="STRING" id="511145.b1793"/>
<dbReference type="jPOST" id="P64493"/>
<dbReference type="PaxDb" id="511145-b1793"/>
<dbReference type="EnsemblBacteria" id="AAC74863">
    <property type="protein sequence ID" value="AAC74863"/>
    <property type="gene ID" value="b1793"/>
</dbReference>
<dbReference type="GeneID" id="75171860"/>
<dbReference type="GeneID" id="946310"/>
<dbReference type="KEGG" id="ecj:JW1782"/>
<dbReference type="KEGG" id="eco:b1793"/>
<dbReference type="KEGG" id="ecoc:C3026_10220"/>
<dbReference type="PATRIC" id="fig|1411691.4.peg.462"/>
<dbReference type="EchoBASE" id="EB4051"/>
<dbReference type="eggNOG" id="COG3042">
    <property type="taxonomic scope" value="Bacteria"/>
</dbReference>
<dbReference type="HOGENOM" id="CLU_155318_1_0_6"/>
<dbReference type="InParanoid" id="P64493"/>
<dbReference type="OMA" id="TLWRRDH"/>
<dbReference type="OrthoDB" id="148878at2"/>
<dbReference type="PhylomeDB" id="P64493"/>
<dbReference type="BioCyc" id="EcoCyc:G6979-MONOMER"/>
<dbReference type="PRO" id="PR:P64493"/>
<dbReference type="Proteomes" id="UP000000625">
    <property type="component" value="Chromosome"/>
</dbReference>
<dbReference type="InterPro" id="IPR005590">
    <property type="entry name" value="DUF333"/>
</dbReference>
<dbReference type="PANTHER" id="PTHR38008:SF2">
    <property type="entry name" value="HEMOLYSIN"/>
    <property type="match status" value="1"/>
</dbReference>
<dbReference type="PANTHER" id="PTHR38008">
    <property type="entry name" value="HEMOLYSIN-RELATED"/>
    <property type="match status" value="1"/>
</dbReference>
<dbReference type="Pfam" id="PF03891">
    <property type="entry name" value="DUF333"/>
    <property type="match status" value="1"/>
</dbReference>
<dbReference type="PROSITE" id="PS51257">
    <property type="entry name" value="PROKAR_LIPOPROTEIN"/>
    <property type="match status" value="1"/>
</dbReference>
<organism>
    <name type="scientific">Escherichia coli (strain K12)</name>
    <dbReference type="NCBI Taxonomy" id="83333"/>
    <lineage>
        <taxon>Bacteria</taxon>
        <taxon>Pseudomonadati</taxon>
        <taxon>Pseudomonadota</taxon>
        <taxon>Gammaproteobacteria</taxon>
        <taxon>Enterobacterales</taxon>
        <taxon>Enterobacteriaceae</taxon>
        <taxon>Escherichia</taxon>
    </lineage>
</organism>
<keyword id="KW-1185">Reference proteome</keyword>
<proteinExistence type="predicted"/>
<reference key="1">
    <citation type="journal article" date="1997" name="Science">
        <title>The complete genome sequence of Escherichia coli K-12.</title>
        <authorList>
            <person name="Blattner F.R."/>
            <person name="Plunkett G. III"/>
            <person name="Bloch C.A."/>
            <person name="Perna N.T."/>
            <person name="Burland V."/>
            <person name="Riley M."/>
            <person name="Collado-Vides J."/>
            <person name="Glasner J.D."/>
            <person name="Rode C.K."/>
            <person name="Mayhew G.F."/>
            <person name="Gregor J."/>
            <person name="Davis N.W."/>
            <person name="Kirkpatrick H.A."/>
            <person name="Goeden M.A."/>
            <person name="Rose D.J."/>
            <person name="Mau B."/>
            <person name="Shao Y."/>
        </authorList>
    </citation>
    <scope>NUCLEOTIDE SEQUENCE [LARGE SCALE GENOMIC DNA]</scope>
    <source>
        <strain>K12 / MG1655 / ATCC 47076</strain>
    </source>
</reference>
<reference key="2">
    <citation type="journal article" date="2006" name="Mol. Syst. Biol.">
        <title>Highly accurate genome sequences of Escherichia coli K-12 strains MG1655 and W3110.</title>
        <authorList>
            <person name="Hayashi K."/>
            <person name="Morooka N."/>
            <person name="Yamamoto Y."/>
            <person name="Fujita K."/>
            <person name="Isono K."/>
            <person name="Choi S."/>
            <person name="Ohtsubo E."/>
            <person name="Baba T."/>
            <person name="Wanner B.L."/>
            <person name="Mori H."/>
            <person name="Horiuchi T."/>
        </authorList>
    </citation>
    <scope>NUCLEOTIDE SEQUENCE [LARGE SCALE GENOMIC DNA]</scope>
    <source>
        <strain>K12 / W3110 / ATCC 27325 / DSM 5911</strain>
    </source>
</reference>
<name>YOAF_ECOLI</name>
<accession>P64493</accession>
<accession>P76244</accession>
<accession>Q2MB26</accession>
<gene>
    <name type="primary">yoaF</name>
    <name type="ordered locus">b1793</name>
    <name type="ordered locus">JW1782</name>
</gene>
<feature type="chain" id="PRO_0000169034" description="Uncharacterized protein YoaF">
    <location>
        <begin position="1"/>
        <end position="84"/>
    </location>
</feature>
<protein>
    <recommendedName>
        <fullName>Uncharacterized protein YoaF</fullName>
    </recommendedName>
</protein>
<sequence length="84" mass="8942">MKIISFVLPCLLVLAGCSTPSQPEAPKPPQIGMANPASVYCQQKGGTLIPVQTAQGVSNNCKLPGGETIDEWALWRRDHPAGEK</sequence>